<keyword id="KW-0963">Cytoplasm</keyword>
<keyword id="KW-0903">Direct protein sequencing</keyword>
<keyword id="KW-0251">Elongation factor</keyword>
<keyword id="KW-0342">GTP-binding</keyword>
<keyword id="KW-0378">Hydrolase</keyword>
<keyword id="KW-0460">Magnesium</keyword>
<keyword id="KW-0479">Metal-binding</keyword>
<keyword id="KW-0547">Nucleotide-binding</keyword>
<keyword id="KW-0648">Protein biosynthesis</keyword>
<evidence type="ECO:0000250" key="1"/>
<evidence type="ECO:0000255" key="2">
    <source>
        <dbReference type="HAMAP-Rule" id="MF_00118"/>
    </source>
</evidence>
<evidence type="ECO:0000269" key="3">
    <source ref="2"/>
</evidence>
<protein>
    <recommendedName>
        <fullName evidence="2">Elongation factor Tu</fullName>
        <shortName evidence="2">EF-Tu</shortName>
        <ecNumber evidence="2">3.6.5.3</ecNumber>
    </recommendedName>
</protein>
<organism>
    <name type="scientific">Xylella fastidiosa (strain 9a5c)</name>
    <dbReference type="NCBI Taxonomy" id="160492"/>
    <lineage>
        <taxon>Bacteria</taxon>
        <taxon>Pseudomonadati</taxon>
        <taxon>Pseudomonadota</taxon>
        <taxon>Gammaproteobacteria</taxon>
        <taxon>Lysobacterales</taxon>
        <taxon>Lysobacteraceae</taxon>
        <taxon>Xylella</taxon>
    </lineage>
</organism>
<accession>Q9P9Q9</accession>
<sequence length="396" mass="42876">MAQDKFKRTKLHVNVGTIGHVDHGKTTLTAALTKVGAERFGGEFKAYDAIDAAPEEKARGITISTAHVEYETEVRHYAHVDCPGHADYVKNMITGAAQMDGAILVCSAADGPMPQTREHILLARQVGVPYIVVFLNKADMVDDAELLELVEMEVRELLSKYDFPGDDTPIVRGSALKALEGDQSEIGVPAIIRLAEALDTHIPNPERAIDRPFLMPVEDVFSISGRGTVVTGRVECGVIKVGDEVEIVGIRPTSKTIVTGVEMFRKLLDQGQAGDNAGLLLRGTKRDEVERGQVLAKPGSIKAHKEFEAEVYVLSKEEGGRHTPFFNGYTPQFYMRTTDITGKVCLPEGVEMVMPGDNVKVTVSLINPVAMGEGQRFAIREGGRTVGAGVVSKVIG</sequence>
<feature type="initiator methionine" description="Removed" evidence="3">
    <location>
        <position position="1"/>
    </location>
</feature>
<feature type="chain" id="PRO_0000091441" description="Elongation factor Tu">
    <location>
        <begin position="2"/>
        <end position="396"/>
    </location>
</feature>
<feature type="domain" description="tr-type G">
    <location>
        <begin position="10"/>
        <end position="206"/>
    </location>
</feature>
<feature type="region of interest" description="G1" evidence="1">
    <location>
        <begin position="19"/>
        <end position="26"/>
    </location>
</feature>
<feature type="region of interest" description="G2" evidence="1">
    <location>
        <begin position="60"/>
        <end position="64"/>
    </location>
</feature>
<feature type="region of interest" description="G3" evidence="1">
    <location>
        <begin position="81"/>
        <end position="84"/>
    </location>
</feature>
<feature type="region of interest" description="G4" evidence="1">
    <location>
        <begin position="136"/>
        <end position="139"/>
    </location>
</feature>
<feature type="region of interest" description="G5" evidence="1">
    <location>
        <begin position="174"/>
        <end position="176"/>
    </location>
</feature>
<feature type="binding site" evidence="2">
    <location>
        <begin position="19"/>
        <end position="26"/>
    </location>
    <ligand>
        <name>GTP</name>
        <dbReference type="ChEBI" id="CHEBI:37565"/>
    </ligand>
</feature>
<feature type="binding site" evidence="2">
    <location>
        <position position="26"/>
    </location>
    <ligand>
        <name>Mg(2+)</name>
        <dbReference type="ChEBI" id="CHEBI:18420"/>
    </ligand>
</feature>
<feature type="binding site" evidence="2">
    <location>
        <begin position="81"/>
        <end position="85"/>
    </location>
    <ligand>
        <name>GTP</name>
        <dbReference type="ChEBI" id="CHEBI:37565"/>
    </ligand>
</feature>
<feature type="binding site" evidence="2">
    <location>
        <begin position="136"/>
        <end position="139"/>
    </location>
    <ligand>
        <name>GTP</name>
        <dbReference type="ChEBI" id="CHEBI:37565"/>
    </ligand>
</feature>
<comment type="function">
    <text evidence="2">GTP hydrolase that promotes the GTP-dependent binding of aminoacyl-tRNA to the A-site of ribosomes during protein biosynthesis.</text>
</comment>
<comment type="catalytic activity">
    <reaction evidence="2">
        <text>GTP + H2O = GDP + phosphate + H(+)</text>
        <dbReference type="Rhea" id="RHEA:19669"/>
        <dbReference type="ChEBI" id="CHEBI:15377"/>
        <dbReference type="ChEBI" id="CHEBI:15378"/>
        <dbReference type="ChEBI" id="CHEBI:37565"/>
        <dbReference type="ChEBI" id="CHEBI:43474"/>
        <dbReference type="ChEBI" id="CHEBI:58189"/>
        <dbReference type="EC" id="3.6.5.3"/>
    </reaction>
    <physiologicalReaction direction="left-to-right" evidence="2">
        <dbReference type="Rhea" id="RHEA:19670"/>
    </physiologicalReaction>
</comment>
<comment type="subunit">
    <text evidence="2">Monomer.</text>
</comment>
<comment type="subcellular location">
    <subcellularLocation>
        <location evidence="2">Cytoplasm</location>
    </subcellularLocation>
</comment>
<comment type="similarity">
    <text evidence="2">Belongs to the TRAFAC class translation factor GTPase superfamily. Classic translation factor GTPase family. EF-Tu/EF-1A subfamily.</text>
</comment>
<proteinExistence type="evidence at protein level"/>
<gene>
    <name evidence="2" type="primary">tufA</name>
    <name type="ordered locus">XF_2628</name>
</gene>
<gene>
    <name evidence="2" type="primary">tufB</name>
    <name type="ordered locus">XF_2640</name>
</gene>
<name>EFTU_XYLFA</name>
<reference key="1">
    <citation type="journal article" date="2000" name="Nature">
        <title>The genome sequence of the plant pathogen Xylella fastidiosa.</title>
        <authorList>
            <person name="Simpson A.J.G."/>
            <person name="Reinach F.C."/>
            <person name="Arruda P."/>
            <person name="Abreu F.A."/>
            <person name="Acencio M."/>
            <person name="Alvarenga R."/>
            <person name="Alves L.M.C."/>
            <person name="Araya J.E."/>
            <person name="Baia G.S."/>
            <person name="Baptista C.S."/>
            <person name="Barros M.H."/>
            <person name="Bonaccorsi E.D."/>
            <person name="Bordin S."/>
            <person name="Bove J.M."/>
            <person name="Briones M.R.S."/>
            <person name="Bueno M.R.P."/>
            <person name="Camargo A.A."/>
            <person name="Camargo L.E.A."/>
            <person name="Carraro D.M."/>
            <person name="Carrer H."/>
            <person name="Colauto N.B."/>
            <person name="Colombo C."/>
            <person name="Costa F.F."/>
            <person name="Costa M.C.R."/>
            <person name="Costa-Neto C.M."/>
            <person name="Coutinho L.L."/>
            <person name="Cristofani M."/>
            <person name="Dias-Neto E."/>
            <person name="Docena C."/>
            <person name="El-Dorry H."/>
            <person name="Facincani A.P."/>
            <person name="Ferreira A.J.S."/>
            <person name="Ferreira V.C.A."/>
            <person name="Ferro J.A."/>
            <person name="Fraga J.S."/>
            <person name="Franca S.C."/>
            <person name="Franco M.C."/>
            <person name="Frohme M."/>
            <person name="Furlan L.R."/>
            <person name="Garnier M."/>
            <person name="Goldman G.H."/>
            <person name="Goldman M.H.S."/>
            <person name="Gomes S.L."/>
            <person name="Gruber A."/>
            <person name="Ho P.L."/>
            <person name="Hoheisel J.D."/>
            <person name="Junqueira M.L."/>
            <person name="Kemper E.L."/>
            <person name="Kitajima J.P."/>
            <person name="Krieger J.E."/>
            <person name="Kuramae E.E."/>
            <person name="Laigret F."/>
            <person name="Lambais M.R."/>
            <person name="Leite L.C.C."/>
            <person name="Lemos E.G.M."/>
            <person name="Lemos M.V.F."/>
            <person name="Lopes S.A."/>
            <person name="Lopes C.R."/>
            <person name="Machado J.A."/>
            <person name="Machado M.A."/>
            <person name="Madeira A.M.B.N."/>
            <person name="Madeira H.M.F."/>
            <person name="Marino C.L."/>
            <person name="Marques M.V."/>
            <person name="Martins E.A.L."/>
            <person name="Martins E.M.F."/>
            <person name="Matsukuma A.Y."/>
            <person name="Menck C.F.M."/>
            <person name="Miracca E.C."/>
            <person name="Miyaki C.Y."/>
            <person name="Monteiro-Vitorello C.B."/>
            <person name="Moon D.H."/>
            <person name="Nagai M.A."/>
            <person name="Nascimento A.L.T.O."/>
            <person name="Netto L.E.S."/>
            <person name="Nhani A. Jr."/>
            <person name="Nobrega F.G."/>
            <person name="Nunes L.R."/>
            <person name="Oliveira M.A."/>
            <person name="de Oliveira M.C."/>
            <person name="de Oliveira R.C."/>
            <person name="Palmieri D.A."/>
            <person name="Paris A."/>
            <person name="Peixoto B.R."/>
            <person name="Pereira G.A.G."/>
            <person name="Pereira H.A. Jr."/>
            <person name="Pesquero J.B."/>
            <person name="Quaggio R.B."/>
            <person name="Roberto P.G."/>
            <person name="Rodrigues V."/>
            <person name="de Rosa A.J.M."/>
            <person name="de Rosa V.E. Jr."/>
            <person name="de Sa R.G."/>
            <person name="Santelli R.V."/>
            <person name="Sawasaki H.E."/>
            <person name="da Silva A.C.R."/>
            <person name="da Silva A.M."/>
            <person name="da Silva F.R."/>
            <person name="Silva W.A. Jr."/>
            <person name="da Silveira J.F."/>
            <person name="Silvestri M.L.Z."/>
            <person name="Siqueira W.J."/>
            <person name="de Souza A.A."/>
            <person name="de Souza A.P."/>
            <person name="Terenzi M.F."/>
            <person name="Truffi D."/>
            <person name="Tsai S.M."/>
            <person name="Tsuhako M.H."/>
            <person name="Vallada H."/>
            <person name="Van Sluys M.A."/>
            <person name="Verjovski-Almeida S."/>
            <person name="Vettore A.L."/>
            <person name="Zago M.A."/>
            <person name="Zatz M."/>
            <person name="Meidanis J."/>
            <person name="Setubal J.C."/>
        </authorList>
    </citation>
    <scope>NUCLEOTIDE SEQUENCE [LARGE SCALE GENOMIC DNA]</scope>
    <source>
        <strain>9a5c</strain>
    </source>
</reference>
<reference key="2">
    <citation type="unpublished observations" date="2002-01">
        <title>Proteomics of the plant pathogen Xylella fastidiosa strain 9a5c: implications for the study of pathogenesis.</title>
        <authorList>
            <person name="Smolka M."/>
            <person name="Winck F."/>
            <person name="Martins D."/>
            <person name="Santoro C."/>
            <person name="Brum I."/>
            <person name="Galembeck E."/>
            <person name="Filho H."/>
            <person name="Machado M."/>
            <person name="Lemos E."/>
            <person name="Toyama M."/>
            <person name="Marangoni S."/>
            <person name="Novello J.C."/>
        </authorList>
    </citation>
    <scope>PROTEIN SEQUENCE OF 2-13</scope>
    <source>
        <strain>9a5c</strain>
    </source>
</reference>
<dbReference type="EC" id="3.6.5.3" evidence="2"/>
<dbReference type="EMBL" id="AE003849">
    <property type="protein sequence ID" value="AAF85425.1"/>
    <property type="molecule type" value="Genomic_DNA"/>
</dbReference>
<dbReference type="EMBL" id="AE003849">
    <property type="protein sequence ID" value="AAF85437.1"/>
    <property type="molecule type" value="Genomic_DNA"/>
</dbReference>
<dbReference type="PIR" id="A82532">
    <property type="entry name" value="A82532"/>
</dbReference>
<dbReference type="SMR" id="Q9P9Q9"/>
<dbReference type="STRING" id="160492.XF_2628"/>
<dbReference type="KEGG" id="xfa:XF_2628"/>
<dbReference type="KEGG" id="xfa:XF_2640"/>
<dbReference type="eggNOG" id="COG0050">
    <property type="taxonomic scope" value="Bacteria"/>
</dbReference>
<dbReference type="HOGENOM" id="CLU_007265_0_0_6"/>
<dbReference type="Proteomes" id="UP000000812">
    <property type="component" value="Chromosome"/>
</dbReference>
<dbReference type="GO" id="GO:0005829">
    <property type="term" value="C:cytosol"/>
    <property type="evidence" value="ECO:0007669"/>
    <property type="project" value="TreeGrafter"/>
</dbReference>
<dbReference type="GO" id="GO:0005525">
    <property type="term" value="F:GTP binding"/>
    <property type="evidence" value="ECO:0007669"/>
    <property type="project" value="UniProtKB-UniRule"/>
</dbReference>
<dbReference type="GO" id="GO:0003924">
    <property type="term" value="F:GTPase activity"/>
    <property type="evidence" value="ECO:0007669"/>
    <property type="project" value="InterPro"/>
</dbReference>
<dbReference type="GO" id="GO:0097216">
    <property type="term" value="F:guanosine tetraphosphate binding"/>
    <property type="evidence" value="ECO:0007669"/>
    <property type="project" value="UniProtKB-ARBA"/>
</dbReference>
<dbReference type="GO" id="GO:0003746">
    <property type="term" value="F:translation elongation factor activity"/>
    <property type="evidence" value="ECO:0007669"/>
    <property type="project" value="UniProtKB-UniRule"/>
</dbReference>
<dbReference type="CDD" id="cd01884">
    <property type="entry name" value="EF_Tu"/>
    <property type="match status" value="1"/>
</dbReference>
<dbReference type="CDD" id="cd03697">
    <property type="entry name" value="EFTU_II"/>
    <property type="match status" value="1"/>
</dbReference>
<dbReference type="CDD" id="cd03707">
    <property type="entry name" value="EFTU_III"/>
    <property type="match status" value="1"/>
</dbReference>
<dbReference type="FunFam" id="2.40.30.10:FF:000001">
    <property type="entry name" value="Elongation factor Tu"/>
    <property type="match status" value="1"/>
</dbReference>
<dbReference type="FunFam" id="3.40.50.300:FF:000003">
    <property type="entry name" value="Elongation factor Tu"/>
    <property type="match status" value="1"/>
</dbReference>
<dbReference type="Gene3D" id="3.40.50.300">
    <property type="entry name" value="P-loop containing nucleotide triphosphate hydrolases"/>
    <property type="match status" value="1"/>
</dbReference>
<dbReference type="Gene3D" id="2.40.30.10">
    <property type="entry name" value="Translation factors"/>
    <property type="match status" value="2"/>
</dbReference>
<dbReference type="HAMAP" id="MF_00118_B">
    <property type="entry name" value="EF_Tu_B"/>
    <property type="match status" value="1"/>
</dbReference>
<dbReference type="InterPro" id="IPR041709">
    <property type="entry name" value="EF-Tu_GTP-bd"/>
</dbReference>
<dbReference type="InterPro" id="IPR050055">
    <property type="entry name" value="EF-Tu_GTPase"/>
</dbReference>
<dbReference type="InterPro" id="IPR004161">
    <property type="entry name" value="EFTu-like_2"/>
</dbReference>
<dbReference type="InterPro" id="IPR033720">
    <property type="entry name" value="EFTU_2"/>
</dbReference>
<dbReference type="InterPro" id="IPR031157">
    <property type="entry name" value="G_TR_CS"/>
</dbReference>
<dbReference type="InterPro" id="IPR027417">
    <property type="entry name" value="P-loop_NTPase"/>
</dbReference>
<dbReference type="InterPro" id="IPR005225">
    <property type="entry name" value="Small_GTP-bd"/>
</dbReference>
<dbReference type="InterPro" id="IPR000795">
    <property type="entry name" value="T_Tr_GTP-bd_dom"/>
</dbReference>
<dbReference type="InterPro" id="IPR009000">
    <property type="entry name" value="Transl_B-barrel_sf"/>
</dbReference>
<dbReference type="InterPro" id="IPR009001">
    <property type="entry name" value="Transl_elong_EF1A/Init_IF2_C"/>
</dbReference>
<dbReference type="InterPro" id="IPR004541">
    <property type="entry name" value="Transl_elong_EFTu/EF1A_bac/org"/>
</dbReference>
<dbReference type="InterPro" id="IPR004160">
    <property type="entry name" value="Transl_elong_EFTu/EF1A_C"/>
</dbReference>
<dbReference type="NCBIfam" id="TIGR00485">
    <property type="entry name" value="EF-Tu"/>
    <property type="match status" value="1"/>
</dbReference>
<dbReference type="NCBIfam" id="NF000766">
    <property type="entry name" value="PRK00049.1"/>
    <property type="match status" value="1"/>
</dbReference>
<dbReference type="NCBIfam" id="NF009372">
    <property type="entry name" value="PRK12735.1"/>
    <property type="match status" value="1"/>
</dbReference>
<dbReference type="NCBIfam" id="NF009373">
    <property type="entry name" value="PRK12736.1"/>
    <property type="match status" value="1"/>
</dbReference>
<dbReference type="NCBIfam" id="TIGR00231">
    <property type="entry name" value="small_GTP"/>
    <property type="match status" value="1"/>
</dbReference>
<dbReference type="PANTHER" id="PTHR43721:SF22">
    <property type="entry name" value="ELONGATION FACTOR TU, MITOCHONDRIAL"/>
    <property type="match status" value="1"/>
</dbReference>
<dbReference type="PANTHER" id="PTHR43721">
    <property type="entry name" value="ELONGATION FACTOR TU-RELATED"/>
    <property type="match status" value="1"/>
</dbReference>
<dbReference type="Pfam" id="PF00009">
    <property type="entry name" value="GTP_EFTU"/>
    <property type="match status" value="1"/>
</dbReference>
<dbReference type="Pfam" id="PF03144">
    <property type="entry name" value="GTP_EFTU_D2"/>
    <property type="match status" value="1"/>
</dbReference>
<dbReference type="Pfam" id="PF03143">
    <property type="entry name" value="GTP_EFTU_D3"/>
    <property type="match status" value="1"/>
</dbReference>
<dbReference type="PRINTS" id="PR00315">
    <property type="entry name" value="ELONGATNFCT"/>
</dbReference>
<dbReference type="SUPFAM" id="SSF50465">
    <property type="entry name" value="EF-Tu/eEF-1alpha/eIF2-gamma C-terminal domain"/>
    <property type="match status" value="1"/>
</dbReference>
<dbReference type="SUPFAM" id="SSF52540">
    <property type="entry name" value="P-loop containing nucleoside triphosphate hydrolases"/>
    <property type="match status" value="1"/>
</dbReference>
<dbReference type="SUPFAM" id="SSF50447">
    <property type="entry name" value="Translation proteins"/>
    <property type="match status" value="1"/>
</dbReference>
<dbReference type="PROSITE" id="PS00301">
    <property type="entry name" value="G_TR_1"/>
    <property type="match status" value="1"/>
</dbReference>
<dbReference type="PROSITE" id="PS51722">
    <property type="entry name" value="G_TR_2"/>
    <property type="match status" value="1"/>
</dbReference>